<name>IVBI5_PSEPO</name>
<organism>
    <name type="scientific">Pseudechis porphyriacus</name>
    <name type="common">Red-bellied black snake</name>
    <dbReference type="NCBI Taxonomy" id="8671"/>
    <lineage>
        <taxon>Eukaryota</taxon>
        <taxon>Metazoa</taxon>
        <taxon>Chordata</taxon>
        <taxon>Craniata</taxon>
        <taxon>Vertebrata</taxon>
        <taxon>Euteleostomi</taxon>
        <taxon>Lepidosauria</taxon>
        <taxon>Squamata</taxon>
        <taxon>Bifurcata</taxon>
        <taxon>Unidentata</taxon>
        <taxon>Episquamata</taxon>
        <taxon>Toxicofera</taxon>
        <taxon>Serpentes</taxon>
        <taxon>Colubroidea</taxon>
        <taxon>Elapidae</taxon>
        <taxon>Hydrophiinae</taxon>
        <taxon>Pseudechis</taxon>
    </lineage>
</organism>
<sequence length="83" mass="9094">MSSGGLLLLLGLLTLWEGLTPVSSKDRPEFCELPADSGSCKGNFQAFYYHPVHRTCLEFIYGGCEGNANNFKTIDECKRTCAA</sequence>
<reference key="1">
    <citation type="journal article" date="2008" name="Cell. Mol. Life Sci.">
        <title>Common evolution of waprin and Kunitz-like toxin families in Australian venomous snakes.</title>
        <authorList>
            <person name="St Pierre L."/>
            <person name="Earl S.T."/>
            <person name="Filippovich I."/>
            <person name="Sorokina N."/>
            <person name="Masci P.P."/>
            <person name="De Jersey J."/>
            <person name="Lavin M.F."/>
        </authorList>
    </citation>
    <scope>NUCLEOTIDE SEQUENCE [GENOMIC DNA]</scope>
    <source>
        <tissue>Venom gland</tissue>
    </source>
</reference>
<feature type="signal peptide" evidence="2">
    <location>
        <begin position="1"/>
        <end position="24"/>
    </location>
</feature>
<feature type="chain" id="PRO_5000395649" description="Blackelin-5">
    <location>
        <begin position="25"/>
        <end position="83"/>
    </location>
</feature>
<feature type="domain" description="BPTI/Kunitz inhibitor" evidence="3">
    <location>
        <begin position="31"/>
        <end position="81"/>
    </location>
</feature>
<feature type="site" description="Reactive bond for trypsin" evidence="1">
    <location>
        <begin position="41"/>
        <end position="42"/>
    </location>
</feature>
<feature type="disulfide bond" evidence="3">
    <location>
        <begin position="31"/>
        <end position="81"/>
    </location>
</feature>
<feature type="disulfide bond" evidence="3">
    <location>
        <begin position="40"/>
        <end position="64"/>
    </location>
</feature>
<feature type="disulfide bond" evidence="3">
    <location>
        <begin position="56"/>
        <end position="77"/>
    </location>
</feature>
<protein>
    <recommendedName>
        <fullName>Blackelin-5</fullName>
    </recommendedName>
</protein>
<keyword id="KW-1015">Disulfide bond</keyword>
<keyword id="KW-0646">Protease inhibitor</keyword>
<keyword id="KW-0964">Secreted</keyword>
<keyword id="KW-0722">Serine protease inhibitor</keyword>
<keyword id="KW-0732">Signal</keyword>
<comment type="function">
    <text evidence="4">Serine protease inhibitor.</text>
</comment>
<comment type="subcellular location">
    <subcellularLocation>
        <location evidence="1">Secreted</location>
    </subcellularLocation>
</comment>
<accession>B5L5R1</accession>
<evidence type="ECO:0000250" key="1"/>
<evidence type="ECO:0000255" key="2"/>
<evidence type="ECO:0000255" key="3">
    <source>
        <dbReference type="PROSITE-ProRule" id="PRU00031"/>
    </source>
</evidence>
<evidence type="ECO:0000305" key="4"/>
<proteinExistence type="inferred from homology"/>
<dbReference type="EMBL" id="EU401849">
    <property type="protein sequence ID" value="ACC77798.1"/>
    <property type="molecule type" value="Genomic_DNA"/>
</dbReference>
<dbReference type="SMR" id="B5L5R1"/>
<dbReference type="MEROPS" id="I02.052"/>
<dbReference type="GO" id="GO:0005615">
    <property type="term" value="C:extracellular space"/>
    <property type="evidence" value="ECO:0007669"/>
    <property type="project" value="TreeGrafter"/>
</dbReference>
<dbReference type="GO" id="GO:0004867">
    <property type="term" value="F:serine-type endopeptidase inhibitor activity"/>
    <property type="evidence" value="ECO:0007669"/>
    <property type="project" value="UniProtKB-KW"/>
</dbReference>
<dbReference type="CDD" id="cd22594">
    <property type="entry name" value="Kunitz_textilinin-like"/>
    <property type="match status" value="1"/>
</dbReference>
<dbReference type="FunFam" id="4.10.410.10:FF:000021">
    <property type="entry name" value="Serine protease inhibitor, putative"/>
    <property type="match status" value="1"/>
</dbReference>
<dbReference type="Gene3D" id="4.10.410.10">
    <property type="entry name" value="Pancreatic trypsin inhibitor Kunitz domain"/>
    <property type="match status" value="1"/>
</dbReference>
<dbReference type="InterPro" id="IPR002223">
    <property type="entry name" value="Kunitz_BPTI"/>
</dbReference>
<dbReference type="InterPro" id="IPR036880">
    <property type="entry name" value="Kunitz_BPTI_sf"/>
</dbReference>
<dbReference type="InterPro" id="IPR020901">
    <property type="entry name" value="Prtase_inh_Kunz-CS"/>
</dbReference>
<dbReference type="InterPro" id="IPR050098">
    <property type="entry name" value="TFPI/VKTCI-like"/>
</dbReference>
<dbReference type="PANTHER" id="PTHR10083:SF374">
    <property type="entry name" value="BPTI_KUNITZ INHIBITOR DOMAIN-CONTAINING PROTEIN"/>
    <property type="match status" value="1"/>
</dbReference>
<dbReference type="PANTHER" id="PTHR10083">
    <property type="entry name" value="KUNITZ-TYPE PROTEASE INHIBITOR-RELATED"/>
    <property type="match status" value="1"/>
</dbReference>
<dbReference type="Pfam" id="PF00014">
    <property type="entry name" value="Kunitz_BPTI"/>
    <property type="match status" value="1"/>
</dbReference>
<dbReference type="PRINTS" id="PR00759">
    <property type="entry name" value="BASICPTASE"/>
</dbReference>
<dbReference type="SMART" id="SM00131">
    <property type="entry name" value="KU"/>
    <property type="match status" value="1"/>
</dbReference>
<dbReference type="SUPFAM" id="SSF57362">
    <property type="entry name" value="BPTI-like"/>
    <property type="match status" value="1"/>
</dbReference>
<dbReference type="PROSITE" id="PS00280">
    <property type="entry name" value="BPTI_KUNITZ_1"/>
    <property type="match status" value="1"/>
</dbReference>
<dbReference type="PROSITE" id="PS50279">
    <property type="entry name" value="BPTI_KUNITZ_2"/>
    <property type="match status" value="1"/>
</dbReference>